<gene>
    <name type="primary">yybG</name>
    <name type="ordered locus">BSU40650</name>
</gene>
<keyword id="KW-1185">Reference proteome</keyword>
<feature type="chain" id="PRO_0000050063" description="Uncharacterized protein YybG">
    <location>
        <begin position="1"/>
        <end position="279"/>
    </location>
</feature>
<reference key="1">
    <citation type="journal article" date="1994" name="DNA Res.">
        <title>Systematic sequencing of the 180 kilobase region of the Bacillus subtilis chromosome containing the replication origin.</title>
        <authorList>
            <person name="Ogasawara N."/>
            <person name="Nakai S."/>
            <person name="Yoshikawa H."/>
        </authorList>
    </citation>
    <scope>NUCLEOTIDE SEQUENCE [GENOMIC DNA]</scope>
    <source>
        <strain>168</strain>
    </source>
</reference>
<reference key="2">
    <citation type="journal article" date="1997" name="Nature">
        <title>The complete genome sequence of the Gram-positive bacterium Bacillus subtilis.</title>
        <authorList>
            <person name="Kunst F."/>
            <person name="Ogasawara N."/>
            <person name="Moszer I."/>
            <person name="Albertini A.M."/>
            <person name="Alloni G."/>
            <person name="Azevedo V."/>
            <person name="Bertero M.G."/>
            <person name="Bessieres P."/>
            <person name="Bolotin A."/>
            <person name="Borchert S."/>
            <person name="Borriss R."/>
            <person name="Boursier L."/>
            <person name="Brans A."/>
            <person name="Braun M."/>
            <person name="Brignell S.C."/>
            <person name="Bron S."/>
            <person name="Brouillet S."/>
            <person name="Bruschi C.V."/>
            <person name="Caldwell B."/>
            <person name="Capuano V."/>
            <person name="Carter N.M."/>
            <person name="Choi S.-K."/>
            <person name="Codani J.-J."/>
            <person name="Connerton I.F."/>
            <person name="Cummings N.J."/>
            <person name="Daniel R.A."/>
            <person name="Denizot F."/>
            <person name="Devine K.M."/>
            <person name="Duesterhoeft A."/>
            <person name="Ehrlich S.D."/>
            <person name="Emmerson P.T."/>
            <person name="Entian K.-D."/>
            <person name="Errington J."/>
            <person name="Fabret C."/>
            <person name="Ferrari E."/>
            <person name="Foulger D."/>
            <person name="Fritz C."/>
            <person name="Fujita M."/>
            <person name="Fujita Y."/>
            <person name="Fuma S."/>
            <person name="Galizzi A."/>
            <person name="Galleron N."/>
            <person name="Ghim S.-Y."/>
            <person name="Glaser P."/>
            <person name="Goffeau A."/>
            <person name="Golightly E.J."/>
            <person name="Grandi G."/>
            <person name="Guiseppi G."/>
            <person name="Guy B.J."/>
            <person name="Haga K."/>
            <person name="Haiech J."/>
            <person name="Harwood C.R."/>
            <person name="Henaut A."/>
            <person name="Hilbert H."/>
            <person name="Holsappel S."/>
            <person name="Hosono S."/>
            <person name="Hullo M.-F."/>
            <person name="Itaya M."/>
            <person name="Jones L.-M."/>
            <person name="Joris B."/>
            <person name="Karamata D."/>
            <person name="Kasahara Y."/>
            <person name="Klaerr-Blanchard M."/>
            <person name="Klein C."/>
            <person name="Kobayashi Y."/>
            <person name="Koetter P."/>
            <person name="Koningstein G."/>
            <person name="Krogh S."/>
            <person name="Kumano M."/>
            <person name="Kurita K."/>
            <person name="Lapidus A."/>
            <person name="Lardinois S."/>
            <person name="Lauber J."/>
            <person name="Lazarevic V."/>
            <person name="Lee S.-M."/>
            <person name="Levine A."/>
            <person name="Liu H."/>
            <person name="Masuda S."/>
            <person name="Mauel C."/>
            <person name="Medigue C."/>
            <person name="Medina N."/>
            <person name="Mellado R.P."/>
            <person name="Mizuno M."/>
            <person name="Moestl D."/>
            <person name="Nakai S."/>
            <person name="Noback M."/>
            <person name="Noone D."/>
            <person name="O'Reilly M."/>
            <person name="Ogawa K."/>
            <person name="Ogiwara A."/>
            <person name="Oudega B."/>
            <person name="Park S.-H."/>
            <person name="Parro V."/>
            <person name="Pohl T.M."/>
            <person name="Portetelle D."/>
            <person name="Porwollik S."/>
            <person name="Prescott A.M."/>
            <person name="Presecan E."/>
            <person name="Pujic P."/>
            <person name="Purnelle B."/>
            <person name="Rapoport G."/>
            <person name="Rey M."/>
            <person name="Reynolds S."/>
            <person name="Rieger M."/>
            <person name="Rivolta C."/>
            <person name="Rocha E."/>
            <person name="Roche B."/>
            <person name="Rose M."/>
            <person name="Sadaie Y."/>
            <person name="Sato T."/>
            <person name="Scanlan E."/>
            <person name="Schleich S."/>
            <person name="Schroeter R."/>
            <person name="Scoffone F."/>
            <person name="Sekiguchi J."/>
            <person name="Sekowska A."/>
            <person name="Seror S.J."/>
            <person name="Serror P."/>
            <person name="Shin B.-S."/>
            <person name="Soldo B."/>
            <person name="Sorokin A."/>
            <person name="Tacconi E."/>
            <person name="Takagi T."/>
            <person name="Takahashi H."/>
            <person name="Takemaru K."/>
            <person name="Takeuchi M."/>
            <person name="Tamakoshi A."/>
            <person name="Tanaka T."/>
            <person name="Terpstra P."/>
            <person name="Tognoni A."/>
            <person name="Tosato V."/>
            <person name="Uchiyama S."/>
            <person name="Vandenbol M."/>
            <person name="Vannier F."/>
            <person name="Vassarotti A."/>
            <person name="Viari A."/>
            <person name="Wambutt R."/>
            <person name="Wedler E."/>
            <person name="Wedler H."/>
            <person name="Weitzenegger T."/>
            <person name="Winters P."/>
            <person name="Wipat A."/>
            <person name="Yamamoto H."/>
            <person name="Yamane K."/>
            <person name="Yasumoto K."/>
            <person name="Yata K."/>
            <person name="Yoshida K."/>
            <person name="Yoshikawa H.-F."/>
            <person name="Zumstein E."/>
            <person name="Yoshikawa H."/>
            <person name="Danchin A."/>
        </authorList>
    </citation>
    <scope>NUCLEOTIDE SEQUENCE [LARGE SCALE GENOMIC DNA]</scope>
    <source>
        <strain>168</strain>
    </source>
</reference>
<sequence>MSAEVTLHDNIHYDLSADCQHCFGLCCVALPYAKSADFAFDKDGGTPCRNLQSNYQCSIHKDLREKGFRGCSAYECFGAGQKVSQITYEGKDWRNSPETANQMFDVFPIMQQLHEMLWYLHEALSIDIAKPIHSELRTTFEKIERLTRLSKERLLTLQVDEHRAEVNEWLLKTSELVRAQARHPKLPKKVSRGSVLIGAKLKGLDLRGANLRGALLIAADLRNADLRMTDFIGADMRDADLSGADLTGSIFLTQAQVNAANGDSNTKLPLSVRTPAHWK</sequence>
<organism>
    <name type="scientific">Bacillus subtilis (strain 168)</name>
    <dbReference type="NCBI Taxonomy" id="224308"/>
    <lineage>
        <taxon>Bacteria</taxon>
        <taxon>Bacillati</taxon>
        <taxon>Bacillota</taxon>
        <taxon>Bacilli</taxon>
        <taxon>Bacillales</taxon>
        <taxon>Bacillaceae</taxon>
        <taxon>Bacillus</taxon>
    </lineage>
</organism>
<proteinExistence type="predicted"/>
<protein>
    <recommendedName>
        <fullName>Uncharacterized protein YybG</fullName>
    </recommendedName>
</protein>
<accession>P37497</accession>
<dbReference type="EMBL" id="D26185">
    <property type="protein sequence ID" value="BAA05196.1"/>
    <property type="molecule type" value="Genomic_DNA"/>
</dbReference>
<dbReference type="EMBL" id="AL009126">
    <property type="protein sequence ID" value="CAB16102.1"/>
    <property type="molecule type" value="Genomic_DNA"/>
</dbReference>
<dbReference type="PIR" id="S65990">
    <property type="entry name" value="S65990"/>
</dbReference>
<dbReference type="RefSeq" id="NP_391945.1">
    <property type="nucleotide sequence ID" value="NC_000964.3"/>
</dbReference>
<dbReference type="RefSeq" id="WP_003244562.1">
    <property type="nucleotide sequence ID" value="NZ_OZ025638.1"/>
</dbReference>
<dbReference type="SMR" id="P37497"/>
<dbReference type="FunCoup" id="P37497">
    <property type="interactions" value="114"/>
</dbReference>
<dbReference type="STRING" id="224308.BSU40650"/>
<dbReference type="PaxDb" id="224308-BSU40650"/>
<dbReference type="EnsemblBacteria" id="CAB16102">
    <property type="protein sequence ID" value="CAB16102"/>
    <property type="gene ID" value="BSU_40650"/>
</dbReference>
<dbReference type="GeneID" id="937852"/>
<dbReference type="KEGG" id="bsu:BSU40650"/>
<dbReference type="PATRIC" id="fig|224308.179.peg.4407"/>
<dbReference type="eggNOG" id="COG1357">
    <property type="taxonomic scope" value="Bacteria"/>
</dbReference>
<dbReference type="InParanoid" id="P37497"/>
<dbReference type="OrthoDB" id="154708at2"/>
<dbReference type="PhylomeDB" id="P37497"/>
<dbReference type="BioCyc" id="BSUB:BSU40650-MONOMER"/>
<dbReference type="Proteomes" id="UP000001570">
    <property type="component" value="Chromosome"/>
</dbReference>
<dbReference type="Gene3D" id="2.160.20.80">
    <property type="entry name" value="E3 ubiquitin-protein ligase SopA"/>
    <property type="match status" value="1"/>
</dbReference>
<dbReference type="InterPro" id="IPR001646">
    <property type="entry name" value="5peptide_repeat"/>
</dbReference>
<dbReference type="InterPro" id="IPR051082">
    <property type="entry name" value="Pentapeptide-BTB/POZ_domain"/>
</dbReference>
<dbReference type="PANTHER" id="PTHR14136">
    <property type="entry name" value="BTB_POZ DOMAIN-CONTAINING PROTEIN KCTD9"/>
    <property type="match status" value="1"/>
</dbReference>
<dbReference type="PANTHER" id="PTHR14136:SF37">
    <property type="entry name" value="PENTAPEPTIDE REPEAT-CONTAINING PROTEIN"/>
    <property type="match status" value="1"/>
</dbReference>
<dbReference type="Pfam" id="PF00805">
    <property type="entry name" value="Pentapeptide"/>
    <property type="match status" value="2"/>
</dbReference>
<dbReference type="SUPFAM" id="SSF141571">
    <property type="entry name" value="Pentapeptide repeat-like"/>
    <property type="match status" value="1"/>
</dbReference>
<name>YYBG_BACSU</name>